<sequence length="307" mass="32021">MTEHGLMSELDLLVSEGRNPRTMDIDLLPTIDVLRKINDEDRLVPVAVEKVLPEIAAAVDRIVLAFQKGARLIYVGAGTSGRLGVLDASECPPTFGVPEDMVIGLIAGGPDALVRSTEGAEDDPKMGAQALQEIGLTPDDVVMGIAVSGRTPYVIGGLNYAKQVGATTVALSCNPASTIAGIADIAISPVVGPEVLTGSTRLKSGTAQKLVLNMLTTASMIRIGKSFQNLMVDLNPSNKKLVARATRMVMQTTGCTAQQAKQALHQTSNDVKLAILVTITGLDVEAARAALGKAGGFLRKAISDPTA</sequence>
<dbReference type="EC" id="4.2.1.126" evidence="1"/>
<dbReference type="EMBL" id="BA000012">
    <property type="protein sequence ID" value="BAB53395.1"/>
    <property type="molecule type" value="Genomic_DNA"/>
</dbReference>
<dbReference type="RefSeq" id="WP_010914702.1">
    <property type="nucleotide sequence ID" value="NC_002678.2"/>
</dbReference>
<dbReference type="SMR" id="Q986Q8"/>
<dbReference type="KEGG" id="mlo:mll7248"/>
<dbReference type="PATRIC" id="fig|266835.9.peg.5790"/>
<dbReference type="eggNOG" id="COG2103">
    <property type="taxonomic scope" value="Bacteria"/>
</dbReference>
<dbReference type="HOGENOM" id="CLU_049049_1_1_5"/>
<dbReference type="UniPathway" id="UPA00342"/>
<dbReference type="UniPathway" id="UPA00343"/>
<dbReference type="UniPathway" id="UPA00544"/>
<dbReference type="Proteomes" id="UP000000552">
    <property type="component" value="Chromosome"/>
</dbReference>
<dbReference type="GO" id="GO:0097367">
    <property type="term" value="F:carbohydrate derivative binding"/>
    <property type="evidence" value="ECO:0007669"/>
    <property type="project" value="InterPro"/>
</dbReference>
<dbReference type="GO" id="GO:0016835">
    <property type="term" value="F:carbon-oxygen lyase activity"/>
    <property type="evidence" value="ECO:0007669"/>
    <property type="project" value="UniProtKB-UniRule"/>
</dbReference>
<dbReference type="GO" id="GO:0016803">
    <property type="term" value="F:ether hydrolase activity"/>
    <property type="evidence" value="ECO:0007669"/>
    <property type="project" value="TreeGrafter"/>
</dbReference>
<dbReference type="GO" id="GO:0097175">
    <property type="term" value="P:1,6-anhydro-N-acetyl-beta-muramic acid catabolic process"/>
    <property type="evidence" value="ECO:0007669"/>
    <property type="project" value="UniProtKB-UniRule"/>
</dbReference>
<dbReference type="GO" id="GO:0046348">
    <property type="term" value="P:amino sugar catabolic process"/>
    <property type="evidence" value="ECO:0007669"/>
    <property type="project" value="InterPro"/>
</dbReference>
<dbReference type="GO" id="GO:0097173">
    <property type="term" value="P:N-acetylmuramic acid catabolic process"/>
    <property type="evidence" value="ECO:0007669"/>
    <property type="project" value="UniProtKB-UniPathway"/>
</dbReference>
<dbReference type="GO" id="GO:0009254">
    <property type="term" value="P:peptidoglycan turnover"/>
    <property type="evidence" value="ECO:0007669"/>
    <property type="project" value="UniProtKB-UniRule"/>
</dbReference>
<dbReference type="CDD" id="cd05007">
    <property type="entry name" value="SIS_Etherase"/>
    <property type="match status" value="1"/>
</dbReference>
<dbReference type="FunFam" id="1.10.8.1080:FF:000001">
    <property type="entry name" value="N-acetylmuramic acid 6-phosphate etherase"/>
    <property type="match status" value="1"/>
</dbReference>
<dbReference type="FunFam" id="3.40.50.10490:FF:000014">
    <property type="entry name" value="N-acetylmuramic acid 6-phosphate etherase"/>
    <property type="match status" value="1"/>
</dbReference>
<dbReference type="Gene3D" id="1.10.8.1080">
    <property type="match status" value="1"/>
</dbReference>
<dbReference type="Gene3D" id="3.40.50.10490">
    <property type="entry name" value="Glucose-6-phosphate isomerase like protein, domain 1"/>
    <property type="match status" value="1"/>
</dbReference>
<dbReference type="HAMAP" id="MF_00068">
    <property type="entry name" value="MurQ"/>
    <property type="match status" value="1"/>
</dbReference>
<dbReference type="InterPro" id="IPR005488">
    <property type="entry name" value="Etherase_MurQ"/>
</dbReference>
<dbReference type="InterPro" id="IPR005486">
    <property type="entry name" value="Glucokinase_regulatory_CS"/>
</dbReference>
<dbReference type="InterPro" id="IPR040190">
    <property type="entry name" value="MURQ/GCKR"/>
</dbReference>
<dbReference type="InterPro" id="IPR001347">
    <property type="entry name" value="SIS_dom"/>
</dbReference>
<dbReference type="InterPro" id="IPR046348">
    <property type="entry name" value="SIS_dom_sf"/>
</dbReference>
<dbReference type="NCBIfam" id="TIGR00274">
    <property type="entry name" value="N-acetylmuramic acid 6-phosphate etherase"/>
    <property type="match status" value="1"/>
</dbReference>
<dbReference type="NCBIfam" id="NF003915">
    <property type="entry name" value="PRK05441.1"/>
    <property type="match status" value="1"/>
</dbReference>
<dbReference type="NCBIfam" id="NF009222">
    <property type="entry name" value="PRK12570.1"/>
    <property type="match status" value="1"/>
</dbReference>
<dbReference type="PANTHER" id="PTHR10088">
    <property type="entry name" value="GLUCOKINASE REGULATORY PROTEIN"/>
    <property type="match status" value="1"/>
</dbReference>
<dbReference type="PANTHER" id="PTHR10088:SF5">
    <property type="entry name" value="N-ACETYLMURAMIC ACID 6-PHOSPHATE ETHERASE"/>
    <property type="match status" value="1"/>
</dbReference>
<dbReference type="Pfam" id="PF20741">
    <property type="entry name" value="GKRP-like_C"/>
    <property type="match status" value="1"/>
</dbReference>
<dbReference type="Pfam" id="PF22645">
    <property type="entry name" value="GKRP_SIS_N"/>
    <property type="match status" value="1"/>
</dbReference>
<dbReference type="SUPFAM" id="SSF53697">
    <property type="entry name" value="SIS domain"/>
    <property type="match status" value="1"/>
</dbReference>
<dbReference type="PROSITE" id="PS01272">
    <property type="entry name" value="GCKR"/>
    <property type="match status" value="1"/>
</dbReference>
<dbReference type="PROSITE" id="PS51464">
    <property type="entry name" value="SIS"/>
    <property type="match status" value="1"/>
</dbReference>
<organism>
    <name type="scientific">Mesorhizobium japonicum (strain LMG 29417 / CECT 9101 / MAFF 303099)</name>
    <name type="common">Mesorhizobium loti (strain MAFF 303099)</name>
    <dbReference type="NCBI Taxonomy" id="266835"/>
    <lineage>
        <taxon>Bacteria</taxon>
        <taxon>Pseudomonadati</taxon>
        <taxon>Pseudomonadota</taxon>
        <taxon>Alphaproteobacteria</taxon>
        <taxon>Hyphomicrobiales</taxon>
        <taxon>Phyllobacteriaceae</taxon>
        <taxon>Mesorhizobium</taxon>
    </lineage>
</organism>
<name>MURQ_RHILO</name>
<evidence type="ECO:0000255" key="1">
    <source>
        <dbReference type="HAMAP-Rule" id="MF_00068"/>
    </source>
</evidence>
<keyword id="KW-0119">Carbohydrate metabolism</keyword>
<keyword id="KW-0456">Lyase</keyword>
<reference key="1">
    <citation type="journal article" date="2000" name="DNA Res.">
        <title>Complete genome structure of the nitrogen-fixing symbiotic bacterium Mesorhizobium loti.</title>
        <authorList>
            <person name="Kaneko T."/>
            <person name="Nakamura Y."/>
            <person name="Sato S."/>
            <person name="Asamizu E."/>
            <person name="Kato T."/>
            <person name="Sasamoto S."/>
            <person name="Watanabe A."/>
            <person name="Idesawa K."/>
            <person name="Ishikawa A."/>
            <person name="Kawashima K."/>
            <person name="Kimura T."/>
            <person name="Kishida Y."/>
            <person name="Kiyokawa C."/>
            <person name="Kohara M."/>
            <person name="Matsumoto M."/>
            <person name="Matsuno A."/>
            <person name="Mochizuki Y."/>
            <person name="Nakayama S."/>
            <person name="Nakazaki N."/>
            <person name="Shimpo S."/>
            <person name="Sugimoto M."/>
            <person name="Takeuchi C."/>
            <person name="Yamada M."/>
            <person name="Tabata S."/>
        </authorList>
    </citation>
    <scope>NUCLEOTIDE SEQUENCE [LARGE SCALE GENOMIC DNA]</scope>
    <source>
        <strain>LMG 29417 / CECT 9101 / MAFF 303099</strain>
    </source>
</reference>
<accession>Q986Q8</accession>
<feature type="chain" id="PRO_0000249645" description="N-acetylmuramic acid 6-phosphate etherase">
    <location>
        <begin position="1"/>
        <end position="307"/>
    </location>
</feature>
<feature type="domain" description="SIS" evidence="1">
    <location>
        <begin position="62"/>
        <end position="225"/>
    </location>
</feature>
<feature type="active site" description="Proton donor" evidence="1">
    <location>
        <position position="90"/>
    </location>
</feature>
<feature type="active site" evidence="1">
    <location>
        <position position="121"/>
    </location>
</feature>
<comment type="function">
    <text evidence="1">Specifically catalyzes the cleavage of the D-lactyl ether substituent of MurNAc 6-phosphate, producing GlcNAc 6-phosphate and D-lactate. Together with AnmK, is also required for the utilization of anhydro-N-acetylmuramic acid (anhMurNAc) either imported from the medium or derived from its own cell wall murein, and thus plays a role in cell wall recycling.</text>
</comment>
<comment type="catalytic activity">
    <reaction evidence="1">
        <text>N-acetyl-D-muramate 6-phosphate + H2O = N-acetyl-D-glucosamine 6-phosphate + (R)-lactate</text>
        <dbReference type="Rhea" id="RHEA:26410"/>
        <dbReference type="ChEBI" id="CHEBI:15377"/>
        <dbReference type="ChEBI" id="CHEBI:16004"/>
        <dbReference type="ChEBI" id="CHEBI:57513"/>
        <dbReference type="ChEBI" id="CHEBI:58722"/>
        <dbReference type="EC" id="4.2.1.126"/>
    </reaction>
</comment>
<comment type="pathway">
    <text evidence="1">Amino-sugar metabolism; 1,6-anhydro-N-acetylmuramate degradation.</text>
</comment>
<comment type="pathway">
    <text evidence="1">Amino-sugar metabolism; N-acetylmuramate degradation.</text>
</comment>
<comment type="pathway">
    <text evidence="1">Cell wall biogenesis; peptidoglycan recycling.</text>
</comment>
<comment type="subunit">
    <text evidence="1">Homodimer.</text>
</comment>
<comment type="miscellaneous">
    <text evidence="1">A lyase-type mechanism (elimination/hydration) is suggested for the cleavage of the lactyl ether bond of MurNAc 6-phosphate, with the formation of an alpha,beta-unsaturated aldehyde intermediate with (E)-stereochemistry, followed by the syn addition of water to give product.</text>
</comment>
<comment type="similarity">
    <text evidence="1">Belongs to the GCKR-like family. MurNAc-6-P etherase subfamily.</text>
</comment>
<protein>
    <recommendedName>
        <fullName evidence="1">N-acetylmuramic acid 6-phosphate etherase</fullName>
        <shortName evidence="1">MurNAc-6-P etherase</shortName>
        <ecNumber evidence="1">4.2.1.126</ecNumber>
    </recommendedName>
    <alternativeName>
        <fullName evidence="1">N-acetylmuramic acid 6-phosphate hydrolase</fullName>
    </alternativeName>
    <alternativeName>
        <fullName evidence="1">N-acetylmuramic acid 6-phosphate lyase</fullName>
    </alternativeName>
</protein>
<gene>
    <name evidence="1" type="primary">murQ</name>
    <name type="ordered locus">mll7248</name>
</gene>
<proteinExistence type="inferred from homology"/>